<sequence length="430" mass="47775">MKNVLAIILGGGAGSRLYPLTKQRAKPAVPLAGKYRLIDIPVSNCINADINKIYVLTQFNSASLNRHLSQTYNLSSGFGNGFVEVLAAQITPENPNWFQGTADAVRQYLWLIKEWDVDEYLILSGDHLYRMDYSQFIQRHRDTNADITLSVLPIDEKRASDFGLMKLDGSGRVVEFSEKPKGDELRAMQVDTTILGLDPVAAAAQPFIASMGIYVFKRDVLIDLLSHHPEQTDFGKEVIPAAATRYNTQAFLFNDYWEDIGTIASFYEANLALTQQPSPPFSFYDEQAPIYTRARYLPPTKLLDCQVTQSIIGEGCILKQCTVQNSVLGIRSRIEADCVIQDALLMGADFYETSELRHQNRANGKVPMGIGSGSTIRRAIVDKNAHIGQNVQIVNKDHVEEADREDLGFMIRSGIVVVVKGAVIPDNTVI</sequence>
<gene>
    <name evidence="1" type="primary">glgC</name>
    <name type="ordered locus">Synpcc7942_0603</name>
</gene>
<dbReference type="EC" id="2.7.7.27" evidence="1"/>
<dbReference type="EMBL" id="CP000100">
    <property type="protein sequence ID" value="ABB56635.1"/>
    <property type="molecule type" value="Genomic_DNA"/>
</dbReference>
<dbReference type="RefSeq" id="WP_011243233.1">
    <property type="nucleotide sequence ID" value="NZ_JACJTX010000006.1"/>
</dbReference>
<dbReference type="SMR" id="Q31QN4"/>
<dbReference type="STRING" id="1140.Synpcc7942_0603"/>
<dbReference type="PaxDb" id="1140-Synpcc7942_0603"/>
<dbReference type="KEGG" id="syf:Synpcc7942_0603"/>
<dbReference type="eggNOG" id="COG0448">
    <property type="taxonomic scope" value="Bacteria"/>
</dbReference>
<dbReference type="HOGENOM" id="CLU_029499_14_4_3"/>
<dbReference type="OrthoDB" id="9801810at2"/>
<dbReference type="BioCyc" id="SYNEL:SYNPCC7942_0603-MONOMER"/>
<dbReference type="UniPathway" id="UPA00164"/>
<dbReference type="Proteomes" id="UP000889800">
    <property type="component" value="Chromosome"/>
</dbReference>
<dbReference type="GO" id="GO:0031470">
    <property type="term" value="C:carboxysome"/>
    <property type="evidence" value="ECO:0007669"/>
    <property type="project" value="UniProtKB-ARBA"/>
</dbReference>
<dbReference type="GO" id="GO:0005524">
    <property type="term" value="F:ATP binding"/>
    <property type="evidence" value="ECO:0007669"/>
    <property type="project" value="UniProtKB-KW"/>
</dbReference>
<dbReference type="GO" id="GO:0008878">
    <property type="term" value="F:glucose-1-phosphate adenylyltransferase activity"/>
    <property type="evidence" value="ECO:0007669"/>
    <property type="project" value="UniProtKB-UniRule"/>
</dbReference>
<dbReference type="GO" id="GO:0043886">
    <property type="term" value="F:structural constituent of carboxysome shell"/>
    <property type="evidence" value="ECO:0007669"/>
    <property type="project" value="UniProtKB-ARBA"/>
</dbReference>
<dbReference type="GO" id="GO:0005978">
    <property type="term" value="P:glycogen biosynthetic process"/>
    <property type="evidence" value="ECO:0007669"/>
    <property type="project" value="UniProtKB-UniRule"/>
</dbReference>
<dbReference type="CDD" id="cd02508">
    <property type="entry name" value="ADP_Glucose_PP"/>
    <property type="match status" value="1"/>
</dbReference>
<dbReference type="CDD" id="cd04651">
    <property type="entry name" value="LbH_G1P_AT_C"/>
    <property type="match status" value="1"/>
</dbReference>
<dbReference type="FunFam" id="3.90.550.10:FF:000030">
    <property type="entry name" value="Glucose-1-phosphate adenylyltransferase"/>
    <property type="match status" value="1"/>
</dbReference>
<dbReference type="Gene3D" id="2.160.10.10">
    <property type="entry name" value="Hexapeptide repeat proteins"/>
    <property type="match status" value="1"/>
</dbReference>
<dbReference type="Gene3D" id="3.90.550.10">
    <property type="entry name" value="Spore Coat Polysaccharide Biosynthesis Protein SpsA, Chain A"/>
    <property type="match status" value="1"/>
</dbReference>
<dbReference type="HAMAP" id="MF_00624">
    <property type="entry name" value="GlgC"/>
    <property type="match status" value="1"/>
</dbReference>
<dbReference type="InterPro" id="IPR011831">
    <property type="entry name" value="ADP-Glc_PPase"/>
</dbReference>
<dbReference type="InterPro" id="IPR005836">
    <property type="entry name" value="ADP_Glu_pyroP_CS"/>
</dbReference>
<dbReference type="InterPro" id="IPR023049">
    <property type="entry name" value="GlgC_bac"/>
</dbReference>
<dbReference type="InterPro" id="IPR005835">
    <property type="entry name" value="NTP_transferase_dom"/>
</dbReference>
<dbReference type="InterPro" id="IPR029044">
    <property type="entry name" value="Nucleotide-diphossugar_trans"/>
</dbReference>
<dbReference type="InterPro" id="IPR011004">
    <property type="entry name" value="Trimer_LpxA-like_sf"/>
</dbReference>
<dbReference type="NCBIfam" id="TIGR02091">
    <property type="entry name" value="glgC"/>
    <property type="match status" value="1"/>
</dbReference>
<dbReference type="NCBIfam" id="NF002772">
    <property type="entry name" value="PRK02862.1"/>
    <property type="match status" value="1"/>
</dbReference>
<dbReference type="PANTHER" id="PTHR43523:SF12">
    <property type="entry name" value="GLUCOSE-1-PHOSPHATE ADENYLYLTRANSFERASE LARGE SUBUNIT 1, CHLOROPLASTIC-RELATED"/>
    <property type="match status" value="1"/>
</dbReference>
<dbReference type="PANTHER" id="PTHR43523">
    <property type="entry name" value="GLUCOSE-1-PHOSPHATE ADENYLYLTRANSFERASE-RELATED"/>
    <property type="match status" value="1"/>
</dbReference>
<dbReference type="Pfam" id="PF25247">
    <property type="entry name" value="LbH_GLGC"/>
    <property type="match status" value="1"/>
</dbReference>
<dbReference type="Pfam" id="PF00483">
    <property type="entry name" value="NTP_transferase"/>
    <property type="match status" value="1"/>
</dbReference>
<dbReference type="SUPFAM" id="SSF53448">
    <property type="entry name" value="Nucleotide-diphospho-sugar transferases"/>
    <property type="match status" value="1"/>
</dbReference>
<dbReference type="SUPFAM" id="SSF51161">
    <property type="entry name" value="Trimeric LpxA-like enzymes"/>
    <property type="match status" value="1"/>
</dbReference>
<dbReference type="PROSITE" id="PS00808">
    <property type="entry name" value="ADP_GLC_PYROPHOSPH_1"/>
    <property type="match status" value="1"/>
</dbReference>
<dbReference type="PROSITE" id="PS00809">
    <property type="entry name" value="ADP_GLC_PYROPHOSPH_2"/>
    <property type="match status" value="1"/>
</dbReference>
<dbReference type="PROSITE" id="PS00810">
    <property type="entry name" value="ADP_GLC_PYROPHOSPH_3"/>
    <property type="match status" value="1"/>
</dbReference>
<keyword id="KW-0067">ATP-binding</keyword>
<keyword id="KW-0119">Carbohydrate metabolism</keyword>
<keyword id="KW-0320">Glycogen biosynthesis</keyword>
<keyword id="KW-0321">Glycogen metabolism</keyword>
<keyword id="KW-0547">Nucleotide-binding</keyword>
<keyword id="KW-0548">Nucleotidyltransferase</keyword>
<keyword id="KW-1185">Reference proteome</keyword>
<keyword id="KW-0808">Transferase</keyword>
<evidence type="ECO:0000255" key="1">
    <source>
        <dbReference type="HAMAP-Rule" id="MF_00624"/>
    </source>
</evidence>
<accession>Q31QN4</accession>
<comment type="function">
    <text evidence="1">Involved in the biosynthesis of ADP-glucose, a building block required for the elongation reactions to produce glycogen. Catalyzes the reaction between ATP and alpha-D-glucose 1-phosphate (G1P) to produce pyrophosphate and ADP-Glc.</text>
</comment>
<comment type="catalytic activity">
    <reaction evidence="1">
        <text>alpha-D-glucose 1-phosphate + ATP + H(+) = ADP-alpha-D-glucose + diphosphate</text>
        <dbReference type="Rhea" id="RHEA:12120"/>
        <dbReference type="ChEBI" id="CHEBI:15378"/>
        <dbReference type="ChEBI" id="CHEBI:30616"/>
        <dbReference type="ChEBI" id="CHEBI:33019"/>
        <dbReference type="ChEBI" id="CHEBI:57498"/>
        <dbReference type="ChEBI" id="CHEBI:58601"/>
        <dbReference type="EC" id="2.7.7.27"/>
    </reaction>
</comment>
<comment type="pathway">
    <text evidence="1">Glycan biosynthesis; glycogen biosynthesis.</text>
</comment>
<comment type="subunit">
    <text evidence="1">Homotetramer.</text>
</comment>
<comment type="similarity">
    <text evidence="1">Belongs to the bacterial/plant glucose-1-phosphate adenylyltransferase family.</text>
</comment>
<feature type="chain" id="PRO_0000261904" description="Glucose-1-phosphate adenylyltransferase">
    <location>
        <begin position="1"/>
        <end position="430"/>
    </location>
</feature>
<feature type="binding site" evidence="1">
    <location>
        <position position="163"/>
    </location>
    <ligand>
        <name>alpha-D-glucose 1-phosphate</name>
        <dbReference type="ChEBI" id="CHEBI:58601"/>
    </ligand>
</feature>
<feature type="binding site" evidence="1">
    <location>
        <begin position="178"/>
        <end position="179"/>
    </location>
    <ligand>
        <name>alpha-D-glucose 1-phosphate</name>
        <dbReference type="ChEBI" id="CHEBI:58601"/>
    </ligand>
</feature>
<feature type="binding site" evidence="1">
    <location>
        <position position="210"/>
    </location>
    <ligand>
        <name>alpha-D-glucose 1-phosphate</name>
        <dbReference type="ChEBI" id="CHEBI:58601"/>
    </ligand>
</feature>
<reference key="1">
    <citation type="submission" date="2005-08" db="EMBL/GenBank/DDBJ databases">
        <title>Complete sequence of chromosome 1 of Synechococcus elongatus PCC 7942.</title>
        <authorList>
            <consortium name="US DOE Joint Genome Institute"/>
            <person name="Copeland A."/>
            <person name="Lucas S."/>
            <person name="Lapidus A."/>
            <person name="Barry K."/>
            <person name="Detter J.C."/>
            <person name="Glavina T."/>
            <person name="Hammon N."/>
            <person name="Israni S."/>
            <person name="Pitluck S."/>
            <person name="Schmutz J."/>
            <person name="Larimer F."/>
            <person name="Land M."/>
            <person name="Kyrpides N."/>
            <person name="Lykidis A."/>
            <person name="Golden S."/>
            <person name="Richardson P."/>
        </authorList>
    </citation>
    <scope>NUCLEOTIDE SEQUENCE [LARGE SCALE GENOMIC DNA]</scope>
    <source>
        <strain>ATCC 33912 / PCC 7942 / FACHB-805</strain>
    </source>
</reference>
<name>GLGC_SYNE7</name>
<organism>
    <name type="scientific">Synechococcus elongatus (strain ATCC 33912 / PCC 7942 / FACHB-805)</name>
    <name type="common">Anacystis nidulans R2</name>
    <dbReference type="NCBI Taxonomy" id="1140"/>
    <lineage>
        <taxon>Bacteria</taxon>
        <taxon>Bacillati</taxon>
        <taxon>Cyanobacteriota</taxon>
        <taxon>Cyanophyceae</taxon>
        <taxon>Synechococcales</taxon>
        <taxon>Synechococcaceae</taxon>
        <taxon>Synechococcus</taxon>
    </lineage>
</organism>
<proteinExistence type="inferred from homology"/>
<protein>
    <recommendedName>
        <fullName evidence="1">Glucose-1-phosphate adenylyltransferase</fullName>
        <ecNumber evidence="1">2.7.7.27</ecNumber>
    </recommendedName>
    <alternativeName>
        <fullName evidence="1">ADP-glucose pyrophosphorylase</fullName>
        <shortName evidence="1">ADPGlc PPase</shortName>
    </alternativeName>
    <alternativeName>
        <fullName evidence="1">ADP-glucose synthase</fullName>
    </alternativeName>
</protein>